<gene>
    <name type="primary">RRT14</name>
    <name type="ordered locus">CAGL0G08778g</name>
</gene>
<organism>
    <name type="scientific">Candida glabrata (strain ATCC 2001 / BCRC 20586 / JCM 3761 / NBRC 0622 / NRRL Y-65 / CBS 138)</name>
    <name type="common">Yeast</name>
    <name type="synonym">Nakaseomyces glabratus</name>
    <dbReference type="NCBI Taxonomy" id="284593"/>
    <lineage>
        <taxon>Eukaryota</taxon>
        <taxon>Fungi</taxon>
        <taxon>Dikarya</taxon>
        <taxon>Ascomycota</taxon>
        <taxon>Saccharomycotina</taxon>
        <taxon>Saccharomycetes</taxon>
        <taxon>Saccharomycetales</taxon>
        <taxon>Saccharomycetaceae</taxon>
        <taxon>Nakaseomyces</taxon>
    </lineage>
</organism>
<keyword id="KW-0539">Nucleus</keyword>
<keyword id="KW-1185">Reference proteome</keyword>
<keyword id="KW-0804">Transcription</keyword>
<keyword id="KW-0805">Transcription regulation</keyword>
<reference key="1">
    <citation type="journal article" date="2004" name="Nature">
        <title>Genome evolution in yeasts.</title>
        <authorList>
            <person name="Dujon B."/>
            <person name="Sherman D."/>
            <person name="Fischer G."/>
            <person name="Durrens P."/>
            <person name="Casaregola S."/>
            <person name="Lafontaine I."/>
            <person name="de Montigny J."/>
            <person name="Marck C."/>
            <person name="Neuveglise C."/>
            <person name="Talla E."/>
            <person name="Goffard N."/>
            <person name="Frangeul L."/>
            <person name="Aigle M."/>
            <person name="Anthouard V."/>
            <person name="Babour A."/>
            <person name="Barbe V."/>
            <person name="Barnay S."/>
            <person name="Blanchin S."/>
            <person name="Beckerich J.-M."/>
            <person name="Beyne E."/>
            <person name="Bleykasten C."/>
            <person name="Boisrame A."/>
            <person name="Boyer J."/>
            <person name="Cattolico L."/>
            <person name="Confanioleri F."/>
            <person name="de Daruvar A."/>
            <person name="Despons L."/>
            <person name="Fabre E."/>
            <person name="Fairhead C."/>
            <person name="Ferry-Dumazet H."/>
            <person name="Groppi A."/>
            <person name="Hantraye F."/>
            <person name="Hennequin C."/>
            <person name="Jauniaux N."/>
            <person name="Joyet P."/>
            <person name="Kachouri R."/>
            <person name="Kerrest A."/>
            <person name="Koszul R."/>
            <person name="Lemaire M."/>
            <person name="Lesur I."/>
            <person name="Ma L."/>
            <person name="Muller H."/>
            <person name="Nicaud J.-M."/>
            <person name="Nikolski M."/>
            <person name="Oztas S."/>
            <person name="Ozier-Kalogeropoulos O."/>
            <person name="Pellenz S."/>
            <person name="Potier S."/>
            <person name="Richard G.-F."/>
            <person name="Straub M.-L."/>
            <person name="Suleau A."/>
            <person name="Swennen D."/>
            <person name="Tekaia F."/>
            <person name="Wesolowski-Louvel M."/>
            <person name="Westhof E."/>
            <person name="Wirth B."/>
            <person name="Zeniou-Meyer M."/>
            <person name="Zivanovic Y."/>
            <person name="Bolotin-Fukuhara M."/>
            <person name="Thierry A."/>
            <person name="Bouchier C."/>
            <person name="Caudron B."/>
            <person name="Scarpelli C."/>
            <person name="Gaillardin C."/>
            <person name="Weissenbach J."/>
            <person name="Wincker P."/>
            <person name="Souciet J.-L."/>
        </authorList>
    </citation>
    <scope>NUCLEOTIDE SEQUENCE [LARGE SCALE GENOMIC DNA]</scope>
    <source>
        <strain>ATCC 2001 / BCRC 20586 / JCM 3761 / NBRC 0622 / NRRL Y-65 / CBS 138</strain>
    </source>
</reference>
<protein>
    <recommendedName>
        <fullName>Regulator of rDNA transcription 14</fullName>
    </recommendedName>
</protein>
<dbReference type="EMBL" id="CR380953">
    <property type="protein sequence ID" value="CAG59671.1"/>
    <property type="molecule type" value="Genomic_DNA"/>
</dbReference>
<dbReference type="RefSeq" id="XP_446744.1">
    <property type="nucleotide sequence ID" value="XM_446744.1"/>
</dbReference>
<dbReference type="SMR" id="Q6FSQ0"/>
<dbReference type="FunCoup" id="Q6FSQ0">
    <property type="interactions" value="301"/>
</dbReference>
<dbReference type="STRING" id="284593.Q6FSQ0"/>
<dbReference type="EnsemblFungi" id="CAGL0G08778g-T">
    <property type="protein sequence ID" value="CAGL0G08778g-T-p1"/>
    <property type="gene ID" value="CAGL0G08778g"/>
</dbReference>
<dbReference type="KEGG" id="cgr:2888094"/>
<dbReference type="CGD" id="CAL0130809">
    <property type="gene designation" value="CAGL0G08778g"/>
</dbReference>
<dbReference type="VEuPathDB" id="FungiDB:B1J91_G08778g"/>
<dbReference type="VEuPathDB" id="FungiDB:CAGL0G08778g"/>
<dbReference type="eggNOG" id="ENOG502S1G1">
    <property type="taxonomic scope" value="Eukaryota"/>
</dbReference>
<dbReference type="HOGENOM" id="CLU_095038_0_0_1"/>
<dbReference type="InParanoid" id="Q6FSQ0"/>
<dbReference type="Proteomes" id="UP000002428">
    <property type="component" value="Chromosome G"/>
</dbReference>
<dbReference type="GO" id="GO:0005730">
    <property type="term" value="C:nucleolus"/>
    <property type="evidence" value="ECO:0007669"/>
    <property type="project" value="UniProtKB-SubCell"/>
</dbReference>
<dbReference type="InterPro" id="IPR031404">
    <property type="entry name" value="Rrt14"/>
</dbReference>
<dbReference type="Pfam" id="PF17075">
    <property type="entry name" value="RRT14"/>
    <property type="match status" value="1"/>
</dbReference>
<comment type="function">
    <text evidence="1">Involved in ribosome biogenesis, probably through modulation of rDNA transcription.</text>
</comment>
<comment type="subcellular location">
    <subcellularLocation>
        <location evidence="1">Nucleus</location>
        <location evidence="1">Nucleolus</location>
    </subcellularLocation>
</comment>
<comment type="similarity">
    <text evidence="3">Belongs to the RRT14 family.</text>
</comment>
<feature type="chain" id="PRO_0000404338" description="Regulator of rDNA transcription 14">
    <location>
        <begin position="1"/>
        <end position="202"/>
    </location>
</feature>
<feature type="region of interest" description="Disordered" evidence="2">
    <location>
        <begin position="145"/>
        <end position="202"/>
    </location>
</feature>
<feature type="compositionally biased region" description="Basic residues" evidence="2">
    <location>
        <begin position="153"/>
        <end position="164"/>
    </location>
</feature>
<feature type="compositionally biased region" description="Polar residues" evidence="2">
    <location>
        <begin position="165"/>
        <end position="174"/>
    </location>
</feature>
<feature type="compositionally biased region" description="Acidic residues" evidence="2">
    <location>
        <begin position="193"/>
        <end position="202"/>
    </location>
</feature>
<evidence type="ECO:0000250" key="1"/>
<evidence type="ECO:0000256" key="2">
    <source>
        <dbReference type="SAM" id="MobiDB-lite"/>
    </source>
</evidence>
<evidence type="ECO:0000305" key="3"/>
<name>RRT14_CANGA</name>
<accession>Q6FSQ0</accession>
<proteinExistence type="inferred from homology"/>
<sequence>MVSKNSKMQATLAVNSVLASLLPGAAAITGSNKKVSKPRVAKAQLIDMNLKKRLELQEKDVYLEKRKEKRARKSTLRKRREEEFEMEQKAKLQILNKHREQGTLTQKEKAYLDELAKRNTKKLKSWDLEDDVKEDFLEIQAQILNDTKESSKRRSSKKKNKNKGFKQTLSSSSKVQDHRYPGLTPGLAPVGLSDEEESSDDE</sequence>